<organism>
    <name type="scientific">Streptococcus pyogenes serotype M3 (strain SSI-1)</name>
    <dbReference type="NCBI Taxonomy" id="193567"/>
    <lineage>
        <taxon>Bacteria</taxon>
        <taxon>Bacillati</taxon>
        <taxon>Bacillota</taxon>
        <taxon>Bacilli</taxon>
        <taxon>Lactobacillales</taxon>
        <taxon>Streptococcaceae</taxon>
        <taxon>Streptococcus</taxon>
    </lineage>
</organism>
<reference key="1">
    <citation type="journal article" date="2003" name="Genome Res.">
        <title>Genome sequence of an M3 strain of Streptococcus pyogenes reveals a large-scale genomic rearrangement in invasive strains and new insights into phage evolution.</title>
        <authorList>
            <person name="Nakagawa I."/>
            <person name="Kurokawa K."/>
            <person name="Yamashita A."/>
            <person name="Nakata M."/>
            <person name="Tomiyasu Y."/>
            <person name="Okahashi N."/>
            <person name="Kawabata S."/>
            <person name="Yamazaki K."/>
            <person name="Shiba T."/>
            <person name="Yasunaga T."/>
            <person name="Hayashi H."/>
            <person name="Hattori M."/>
            <person name="Hamada S."/>
        </authorList>
    </citation>
    <scope>NUCLEOTIDE SEQUENCE [LARGE SCALE GENOMIC DNA]</scope>
    <source>
        <strain>SSI-1</strain>
    </source>
</reference>
<protein>
    <recommendedName>
        <fullName evidence="1">Phosphate import ATP-binding protein PstB 2</fullName>
        <ecNumber evidence="1">7.3.2.1</ecNumber>
    </recommendedName>
    <alternativeName>
        <fullName evidence="1">ABC phosphate transporter 2</fullName>
    </alternativeName>
    <alternativeName>
        <fullName evidence="1">Phosphate-transporting ATPase 2</fullName>
    </alternativeName>
</protein>
<gene>
    <name evidence="1" type="primary">pstB2</name>
    <name type="ordered locus">SPs1078</name>
</gene>
<evidence type="ECO:0000255" key="1">
    <source>
        <dbReference type="HAMAP-Rule" id="MF_01702"/>
    </source>
</evidence>
<comment type="function">
    <text evidence="1">Part of the ABC transporter complex PstSACB involved in phosphate import. Responsible for energy coupling to the transport system.</text>
</comment>
<comment type="catalytic activity">
    <reaction evidence="1">
        <text>phosphate(out) + ATP + H2O = ADP + 2 phosphate(in) + H(+)</text>
        <dbReference type="Rhea" id="RHEA:24440"/>
        <dbReference type="ChEBI" id="CHEBI:15377"/>
        <dbReference type="ChEBI" id="CHEBI:15378"/>
        <dbReference type="ChEBI" id="CHEBI:30616"/>
        <dbReference type="ChEBI" id="CHEBI:43474"/>
        <dbReference type="ChEBI" id="CHEBI:456216"/>
        <dbReference type="EC" id="7.3.2.1"/>
    </reaction>
</comment>
<comment type="subunit">
    <text evidence="1">The complex is composed of two ATP-binding proteins (PstB), two transmembrane proteins (PstC and PstA) and a solute-binding protein (PstS).</text>
</comment>
<comment type="subcellular location">
    <subcellularLocation>
        <location evidence="1">Cell membrane</location>
        <topology evidence="1">Peripheral membrane protein</topology>
    </subcellularLocation>
</comment>
<comment type="similarity">
    <text evidence="1">Belongs to the ABC transporter superfamily. Phosphate importer (TC 3.A.1.7) family.</text>
</comment>
<feature type="chain" id="PRO_0000411257" description="Phosphate import ATP-binding protein PstB 2">
    <location>
        <begin position="1"/>
        <end position="267"/>
    </location>
</feature>
<feature type="domain" description="ABC transporter" evidence="1">
    <location>
        <begin position="21"/>
        <end position="262"/>
    </location>
</feature>
<feature type="binding site" evidence="1">
    <location>
        <begin position="53"/>
        <end position="60"/>
    </location>
    <ligand>
        <name>ATP</name>
        <dbReference type="ChEBI" id="CHEBI:30616"/>
    </ligand>
</feature>
<dbReference type="EC" id="7.3.2.1" evidence="1"/>
<dbReference type="EMBL" id="BA000034">
    <property type="protein sequence ID" value="BAC64173.1"/>
    <property type="molecule type" value="Genomic_DNA"/>
</dbReference>
<dbReference type="SMR" id="P0CZ39"/>
<dbReference type="KEGG" id="sps:SPs1078"/>
<dbReference type="HOGENOM" id="CLU_000604_1_22_9"/>
<dbReference type="GO" id="GO:0005886">
    <property type="term" value="C:plasma membrane"/>
    <property type="evidence" value="ECO:0007669"/>
    <property type="project" value="UniProtKB-SubCell"/>
</dbReference>
<dbReference type="GO" id="GO:0005524">
    <property type="term" value="F:ATP binding"/>
    <property type="evidence" value="ECO:0007669"/>
    <property type="project" value="UniProtKB-KW"/>
</dbReference>
<dbReference type="GO" id="GO:0016887">
    <property type="term" value="F:ATP hydrolysis activity"/>
    <property type="evidence" value="ECO:0007669"/>
    <property type="project" value="InterPro"/>
</dbReference>
<dbReference type="GO" id="GO:0015415">
    <property type="term" value="F:ATPase-coupled phosphate ion transmembrane transporter activity"/>
    <property type="evidence" value="ECO:0007669"/>
    <property type="project" value="UniProtKB-EC"/>
</dbReference>
<dbReference type="GO" id="GO:0035435">
    <property type="term" value="P:phosphate ion transmembrane transport"/>
    <property type="evidence" value="ECO:0007669"/>
    <property type="project" value="InterPro"/>
</dbReference>
<dbReference type="CDD" id="cd03260">
    <property type="entry name" value="ABC_PstB_phosphate_transporter"/>
    <property type="match status" value="1"/>
</dbReference>
<dbReference type="Gene3D" id="3.40.50.300">
    <property type="entry name" value="P-loop containing nucleotide triphosphate hydrolases"/>
    <property type="match status" value="1"/>
</dbReference>
<dbReference type="InterPro" id="IPR003593">
    <property type="entry name" value="AAA+_ATPase"/>
</dbReference>
<dbReference type="InterPro" id="IPR003439">
    <property type="entry name" value="ABC_transporter-like_ATP-bd"/>
</dbReference>
<dbReference type="InterPro" id="IPR017871">
    <property type="entry name" value="ABC_transporter-like_CS"/>
</dbReference>
<dbReference type="InterPro" id="IPR027417">
    <property type="entry name" value="P-loop_NTPase"/>
</dbReference>
<dbReference type="InterPro" id="IPR005670">
    <property type="entry name" value="PstB-like"/>
</dbReference>
<dbReference type="NCBIfam" id="TIGR00972">
    <property type="entry name" value="3a0107s01c2"/>
    <property type="match status" value="1"/>
</dbReference>
<dbReference type="PANTHER" id="PTHR43423">
    <property type="entry name" value="ABC TRANSPORTER I FAMILY MEMBER 17"/>
    <property type="match status" value="1"/>
</dbReference>
<dbReference type="PANTHER" id="PTHR43423:SF10">
    <property type="entry name" value="PHOSPHATE IMPORT ATP-BINDING PROTEIN PSTB 2"/>
    <property type="match status" value="1"/>
</dbReference>
<dbReference type="Pfam" id="PF00005">
    <property type="entry name" value="ABC_tran"/>
    <property type="match status" value="1"/>
</dbReference>
<dbReference type="SMART" id="SM00382">
    <property type="entry name" value="AAA"/>
    <property type="match status" value="1"/>
</dbReference>
<dbReference type="SUPFAM" id="SSF52540">
    <property type="entry name" value="P-loop containing nucleoside triphosphate hydrolases"/>
    <property type="match status" value="1"/>
</dbReference>
<dbReference type="PROSITE" id="PS00211">
    <property type="entry name" value="ABC_TRANSPORTER_1"/>
    <property type="match status" value="1"/>
</dbReference>
<dbReference type="PROSITE" id="PS50893">
    <property type="entry name" value="ABC_TRANSPORTER_2"/>
    <property type="match status" value="1"/>
</dbReference>
<dbReference type="PROSITE" id="PS51238">
    <property type="entry name" value="PSTB"/>
    <property type="match status" value="1"/>
</dbReference>
<keyword id="KW-0067">ATP-binding</keyword>
<keyword id="KW-1003">Cell membrane</keyword>
<keyword id="KW-0472">Membrane</keyword>
<keyword id="KW-0547">Nucleotide-binding</keyword>
<keyword id="KW-0592">Phosphate transport</keyword>
<keyword id="KW-1278">Translocase</keyword>
<keyword id="KW-0813">Transport</keyword>
<sequence length="267" mass="30482">MTEYNWNERHIITFPEETLALATKDLHVYYGAKEAIKGIDMQFEKHKITALIGPSGCGKSTYLRSLNRMNDTIDIARVTGEILYQGIDVNRKDMNVYEIRKHLGMVFQRPNPFAKSIYKNITFAHERAGVKDKKVLDEIVETSLKQAALWDQVKDDLHKSAFTLSGGQQQRLCIARAISVKPDILLMDEPASALDPIATMQLEETMFELKKNYTIIIVTHNMQQAARASDYTAFFYLGNLIEYDKTRNIFQNAQCQSTNDYVSGHFG</sequence>
<name>PSTB2_STRPQ</name>
<proteinExistence type="inferred from homology"/>
<accession>P0CZ39</accession>
<accession>P63379</accession>
<accession>Q99ZG4</accession>